<gene>
    <name type="primary">mamT</name>
    <name type="ordered locus">amb0976</name>
</gene>
<organism>
    <name type="scientific">Paramagnetospirillum magneticum (strain ATCC 700264 / AMB-1)</name>
    <name type="common">Magnetospirillum magneticum</name>
    <dbReference type="NCBI Taxonomy" id="342108"/>
    <lineage>
        <taxon>Bacteria</taxon>
        <taxon>Pseudomonadati</taxon>
        <taxon>Pseudomonadota</taxon>
        <taxon>Alphaproteobacteria</taxon>
        <taxon>Rhodospirillales</taxon>
        <taxon>Magnetospirillaceae</taxon>
        <taxon>Paramagnetospirillum</taxon>
    </lineage>
</organism>
<dbReference type="EMBL" id="AP007255">
    <property type="protein sequence ID" value="BAE49780.1"/>
    <property type="molecule type" value="Genomic_DNA"/>
</dbReference>
<dbReference type="STRING" id="342108.amb0976"/>
<dbReference type="KEGG" id="mag:amb0976"/>
<dbReference type="HOGENOM" id="CLU_1523388_0_0_5"/>
<dbReference type="Proteomes" id="UP000007058">
    <property type="component" value="Chromosome"/>
</dbReference>
<dbReference type="GO" id="GO:0110146">
    <property type="term" value="C:magnetosome membrane"/>
    <property type="evidence" value="ECO:0000315"/>
    <property type="project" value="UniProtKB"/>
</dbReference>
<dbReference type="GO" id="GO:0046872">
    <property type="term" value="F:metal ion binding"/>
    <property type="evidence" value="ECO:0007669"/>
    <property type="project" value="UniProtKB-KW"/>
</dbReference>
<dbReference type="GO" id="GO:0016491">
    <property type="term" value="F:oxidoreductase activity"/>
    <property type="evidence" value="ECO:0007669"/>
    <property type="project" value="UniProtKB-KW"/>
</dbReference>
<dbReference type="Gene3D" id="2.30.42.60">
    <property type="match status" value="1"/>
</dbReference>
<dbReference type="InterPro" id="IPR040963">
    <property type="entry name" value="MCR"/>
</dbReference>
<dbReference type="InterPro" id="IPR036280">
    <property type="entry name" value="Multihaem_cyt_sf"/>
</dbReference>
<dbReference type="NCBIfam" id="NF040992">
    <property type="entry name" value="MamT"/>
    <property type="match status" value="1"/>
</dbReference>
<dbReference type="Pfam" id="PF18509">
    <property type="entry name" value="MCR"/>
    <property type="match status" value="1"/>
</dbReference>
<dbReference type="SUPFAM" id="SSF48695">
    <property type="entry name" value="Multiheme cytochromes"/>
    <property type="match status" value="1"/>
</dbReference>
<comment type="function">
    <text evidence="6 7">May play a role in magnetite crystal maturation (Probable). May transfer electrons to balance the Fe(2+)-Fe(3+) ratio during magnetite formation (Probable).</text>
</comment>
<comment type="cofactor">
    <cofactor evidence="7">
        <name>heme</name>
        <dbReference type="ChEBI" id="CHEBI:30413"/>
    </cofactor>
    <text evidence="7">Probably binds 2 heme groups via the 2 magnetochrome (MCR) motifs.</text>
</comment>
<comment type="subcellular location">
    <subcellularLocation>
        <location evidence="5">Magnetosome membrane</location>
        <topology evidence="1">Single-pass membrane protein</topology>
    </subcellularLocation>
</comment>
<comment type="induction">
    <text evidence="6">Part of the probable 18 gene mamAB operon.</text>
</comment>
<comment type="disruption phenotype">
    <text evidence="2 4">Cells have a weak magnetic response and make magnetosome membranes. Magnetosomes are about half the size of wild-type, but nearly as numerous (PubMed:20212111). Deletion of this gene with amb1002 to amb1007 give smaller, elongated magnetite crystals, does not alter subcellular localization of MamC, MamF, MamI or MmsF (PubMed:25775527). Deletion of genes mamH to mamV (amb0961 to amb0978) gives cells with no magnetosomes and no magnetic response (PubMed:20212111).</text>
</comment>
<comment type="miscellaneous">
    <text evidence="5">This bacteria makes up to 20 cubo-octahedral magnetosomes of about 45 nm in diameter which contain membrane-bound crystals of magnetite (Fe(3)O(4)).</text>
</comment>
<comment type="miscellaneous">
    <text evidence="3">Expression of just the minimal mamAB gene cluster (amb0961 to amb0978), including this gene, is sufficient to form a minimal magnetosome chain with small magnetite particles.</text>
</comment>
<comment type="similarity">
    <text evidence="5">Belongs to the magnetosome MamT family.</text>
</comment>
<feature type="chain" id="PRO_0000447786" description="Magnetosome protein MamT">
    <location>
        <begin position="1"/>
        <end position="176"/>
    </location>
</feature>
<feature type="topological domain" description="Cytoplasmic" evidence="5">
    <location>
        <begin position="1"/>
        <end position="11"/>
    </location>
</feature>
<feature type="transmembrane region" description="Helical" evidence="1">
    <location>
        <begin position="12"/>
        <end position="30"/>
    </location>
</feature>
<feature type="topological domain" description="Lumenal" evidence="5">
    <location>
        <begin position="31"/>
        <end position="176"/>
    </location>
</feature>
<feature type="short sequence motif" description="MCR (magnetochrome) 1" evidence="7">
    <location>
        <begin position="89"/>
        <end position="109"/>
    </location>
</feature>
<feature type="short sequence motif" description="MCR 2" evidence="7">
    <location>
        <begin position="140"/>
        <end position="160"/>
    </location>
</feature>
<feature type="binding site" description="covalent" evidence="7">
    <location>
        <position position="103"/>
    </location>
    <ligand>
        <name>heme</name>
        <dbReference type="ChEBI" id="CHEBI:30413"/>
        <label>1</label>
    </ligand>
</feature>
<feature type="binding site" description="covalent" evidence="7">
    <location>
        <position position="106"/>
    </location>
    <ligand>
        <name>heme</name>
        <dbReference type="ChEBI" id="CHEBI:30413"/>
        <label>1</label>
    </ligand>
</feature>
<feature type="binding site" description="axial binding residue" evidence="7">
    <location>
        <position position="107"/>
    </location>
    <ligand>
        <name>heme</name>
        <dbReference type="ChEBI" id="CHEBI:30413"/>
        <label>1</label>
    </ligand>
    <ligandPart>
        <name>Fe</name>
        <dbReference type="ChEBI" id="CHEBI:18248"/>
    </ligandPart>
</feature>
<feature type="binding site" description="covalent" evidence="7">
    <location>
        <position position="154"/>
    </location>
    <ligand>
        <name>heme</name>
        <dbReference type="ChEBI" id="CHEBI:30413"/>
        <label>2</label>
    </ligand>
</feature>
<feature type="binding site" description="covalent" evidence="7">
    <location>
        <position position="157"/>
    </location>
    <ligand>
        <name>heme</name>
        <dbReference type="ChEBI" id="CHEBI:30413"/>
        <label>2</label>
    </ligand>
</feature>
<feature type="binding site" description="axial binding residue" evidence="7">
    <location>
        <position position="158"/>
    </location>
    <ligand>
        <name>heme</name>
        <dbReference type="ChEBI" id="CHEBI:30413"/>
        <label>2</label>
    </ligand>
    <ligandPart>
        <name>Fe</name>
        <dbReference type="ChEBI" id="CHEBI:18248"/>
    </ligandPart>
</feature>
<feature type="mutagenesis site" description="Loss of magnetic response, no restoration of magnetite particle size." evidence="4">
    <original>CIQCH</original>
    <variation>AIQAA</variation>
    <location>
        <begin position="103"/>
        <end position="107"/>
    </location>
</feature>
<feature type="mutagenesis site" description="Loss of magnetic response, no restoration of magnetite particle size." evidence="4">
    <original>CIKCH</original>
    <variation>AIKAA</variation>
    <location>
        <begin position="154"/>
        <end position="158"/>
    </location>
</feature>
<accession>Q2W8P5</accession>
<protein>
    <recommendedName>
        <fullName evidence="5">Magnetosome protein MamT</fullName>
    </recommendedName>
    <alternativeName>
        <fullName evidence="5">Magnetochrome MamT</fullName>
    </alternativeName>
</protein>
<reference key="1">
    <citation type="journal article" date="2005" name="DNA Res.">
        <title>Complete genome sequence of the facultative anaerobic magnetotactic bacterium Magnetospirillum sp. strain AMB-1.</title>
        <authorList>
            <person name="Matsunaga T."/>
            <person name="Okamura Y."/>
            <person name="Fukuda Y."/>
            <person name="Wahyudi A.T."/>
            <person name="Murase Y."/>
            <person name="Takeyama H."/>
        </authorList>
    </citation>
    <scope>NUCLEOTIDE SEQUENCE [LARGE SCALE GENOMIC DNA]</scope>
    <source>
        <strain>ATCC 700264 / AMB-1</strain>
    </source>
</reference>
<reference key="2">
    <citation type="journal article" date="2010" name="Proc. Natl. Acad. Sci. U.S.A.">
        <title>Comprehensive genetic dissection of the magnetosome gene island reveals the step-wise assembly of a prokaryotic organelle.</title>
        <authorList>
            <person name="Murat D."/>
            <person name="Quinlan A."/>
            <person name="Vali H."/>
            <person name="Komeili A."/>
        </authorList>
    </citation>
    <scope>FUNCTION</scope>
    <scope>PROBABLE OPERON</scope>
    <scope>DISRUPTION PHENOTYPE</scope>
    <source>
        <strain>ATCC 700264 / AMB-1</strain>
    </source>
</reference>
<reference key="3">
    <citation type="journal article" date="2012" name="Biochem. Soc. Trans.">
        <title>Magnetochrome: a c-type cytochrome domain specific to magnetotatic bacteria.</title>
        <authorList>
            <person name="Siponen M.I."/>
            <person name="Adryanczyk G."/>
            <person name="Ginet N."/>
            <person name="Arnoux P."/>
            <person name="Pignol D."/>
        </authorList>
    </citation>
    <scope>POSSIBLE COFACTOR</scope>
    <source>
        <strain>ATCC 700264 / AMB-1</strain>
    </source>
</reference>
<reference key="4">
    <citation type="journal article" date="2012" name="Mol. Microbiol.">
        <title>The magnetosome membrane protein, MmsF, is a major regulator of magnetite biomineralization in Magnetospirillum magneticum AMB-1.</title>
        <authorList>
            <person name="Murat D."/>
            <person name="Falahati V."/>
            <person name="Bertinetti L."/>
            <person name="Csencsits R."/>
            <person name="Koernig A."/>
            <person name="Downing K."/>
            <person name="Faivre D."/>
            <person name="Komeili A."/>
        </authorList>
    </citation>
    <scope>MINIMAL MAGNETOSOME ISLAND</scope>
    <source>
        <strain>ATCC 700264 / AMB-1</strain>
    </source>
</reference>
<reference key="5">
    <citation type="journal article" date="2015" name="Proc. Natl. Acad. Sci. U.S.A.">
        <title>Genetic and biochemical investigations of the role of MamP in redox control of iron biomineralization in Magnetospirillum magneticum.</title>
        <authorList>
            <person name="Jones S.R."/>
            <person name="Wilson T.D."/>
            <person name="Brown M.E."/>
            <person name="Rahn-Lee L."/>
            <person name="Yu Y."/>
            <person name="Fredriksen L.L."/>
            <person name="Ozyamak E."/>
            <person name="Komeili A."/>
            <person name="Chang M.C."/>
        </authorList>
    </citation>
    <scope>DISRUPTION PHENOTYPE</scope>
    <scope>MUTAGENESIS OF 103-CYS--HIS-107 AND 154-CYS--HIS-158</scope>
    <source>
        <strain>ATCC 700264 / AMB-1</strain>
    </source>
</reference>
<sequence>MSMEAPRRGRRWVSLGMIALLAAIGLGLYWDQLSTPSGITPATSPRRAEGLLLGRLPLPMEPSLLSPLERLLEPPLRYKLMTIRHIPPVKPGTGMPHPYVGDCIQCHLMVGGPAAGSQFKTPYGAVLENLSRVRKLGPPILPTSRQPHPPAGRCIKCHDIVVKVPVDKKGGMRWQL</sequence>
<proteinExistence type="evidence at protein level"/>
<keyword id="KW-0091">Biomineralization</keyword>
<keyword id="KW-0349">Heme</keyword>
<keyword id="KW-0408">Iron</keyword>
<keyword id="KW-1281">Magnetosome</keyword>
<keyword id="KW-0472">Membrane</keyword>
<keyword id="KW-0479">Metal-binding</keyword>
<keyword id="KW-0560">Oxidoreductase</keyword>
<keyword id="KW-0812">Transmembrane</keyword>
<keyword id="KW-1133">Transmembrane helix</keyword>
<name>MAMT_PARM1</name>
<evidence type="ECO:0000255" key="1"/>
<evidence type="ECO:0000269" key="2">
    <source>
    </source>
</evidence>
<evidence type="ECO:0000269" key="3">
    <source>
    </source>
</evidence>
<evidence type="ECO:0000269" key="4">
    <source>
    </source>
</evidence>
<evidence type="ECO:0000305" key="5"/>
<evidence type="ECO:0000305" key="6">
    <source>
    </source>
</evidence>
<evidence type="ECO:0000305" key="7">
    <source>
    </source>
</evidence>